<sequence length="395" mass="44034">MLPAVGSADEEEDPAEEDCPELVPMETTQSEEEEKSGLGAKIPVTIITGYLGAGKTTLLNYILTEQHSKRVAVILNEFGEGSALEKSLAVSQGGELYEEWLELRNGCLCCSVKDNGLRAIENLMQKKGKFDYILLETTGLADPGAVASMFWVDAELGSDIYLDGIITIVDSKYGLKHLAEEKPDGLINEATRQVALADAILINKTDLVPEEDVKKLRATIRSINGLGQILETQRSRVDLSNVLDLHAFDSLSGISLQKKLQHVPGTQPHLDQSIVTITFEVPGNAKEEHLNMFIQNLLWEKNVRNKDNHCMEVIRLKGLVSIKDKSQQVIVQGVHELYDLEETPVSWKDDTERTNRLVLLGRNLDKDILKQLFIATVTETEKQWTTHFKEDQVCT</sequence>
<feature type="chain" id="PRO_0000316813" description="Zinc-regulated GTPase metalloprotein activator 1B">
    <location>
        <begin position="1"/>
        <end position="395"/>
    </location>
</feature>
<feature type="domain" description="CobW C-terminal">
    <location>
        <begin position="274"/>
        <end position="377"/>
    </location>
</feature>
<feature type="region of interest" description="Disordered" evidence="3">
    <location>
        <begin position="1"/>
        <end position="36"/>
    </location>
</feature>
<feature type="short sequence motif" description="psi-PxLVp motif" evidence="1">
    <location>
        <begin position="17"/>
        <end position="24"/>
    </location>
</feature>
<feature type="short sequence motif" description="CXCC motif" evidence="2">
    <location>
        <begin position="107"/>
        <end position="110"/>
    </location>
</feature>
<feature type="compositionally biased region" description="Acidic residues" evidence="3">
    <location>
        <begin position="8"/>
        <end position="20"/>
    </location>
</feature>
<feature type="binding site" evidence="2">
    <location>
        <begin position="49"/>
        <end position="56"/>
    </location>
    <ligand>
        <name>GTP</name>
        <dbReference type="ChEBI" id="CHEBI:37565"/>
    </ligand>
</feature>
<feature type="binding site" evidence="1">
    <location>
        <position position="107"/>
    </location>
    <ligand>
        <name>Zn(2+)</name>
        <dbReference type="ChEBI" id="CHEBI:29105"/>
    </ligand>
</feature>
<feature type="binding site" evidence="1">
    <location>
        <position position="109"/>
    </location>
    <ligand>
        <name>Zn(2+)</name>
        <dbReference type="ChEBI" id="CHEBI:29105"/>
    </ligand>
</feature>
<feature type="binding site" evidence="2">
    <location>
        <begin position="110"/>
        <end position="114"/>
    </location>
    <ligand>
        <name>GTP</name>
        <dbReference type="ChEBI" id="CHEBI:37565"/>
    </ligand>
</feature>
<feature type="binding site" evidence="1">
    <location>
        <position position="110"/>
    </location>
    <ligand>
        <name>Zn(2+)</name>
        <dbReference type="ChEBI" id="CHEBI:29105"/>
    </ligand>
</feature>
<feature type="binding site" evidence="2">
    <location>
        <begin position="203"/>
        <end position="206"/>
    </location>
    <ligand>
        <name>GTP</name>
        <dbReference type="ChEBI" id="CHEBI:37565"/>
    </ligand>
</feature>
<feature type="sequence conflict" description="In Ref. 5; AAI20992." evidence="5" ref="5">
    <original>V</original>
    <variation>I</variation>
    <location>
        <position position="242"/>
    </location>
</feature>
<name>ZNG1B_HUMAN</name>
<protein>
    <recommendedName>
        <fullName evidence="4">Zinc-regulated GTPase metalloprotein activator 1B</fullName>
        <ecNumber evidence="1">3.6.5.-</ecNumber>
    </recommendedName>
    <alternativeName>
        <fullName evidence="5">Cobalamin synthase W domain-containing protein 2</fullName>
        <shortName evidence="5">COBW domain-containing protein 2</shortName>
    </alternativeName>
</protein>
<comment type="function">
    <text evidence="1">Zinc chaperone that directly transfers zinc cofactor to target metalloproteins, thereby activating them. Catalyzes zinc insertion into the active site of methionine aminopeptidase METAP1, which function to cleave the initiator methionine from polypeptides during or after protein translation. Mechanistically, the N-terminal psi-PxLVp motif binds to the C6H2-type zinc finger of inactive form of METAP1. After formation of the docked complex, zinc is transferred from the CXCC motif in the GTPase domain of ZNG1B to the zinc binding site in the peptidase domain of METAP1 in a process requiring GTP hydrolysis. GTP/GDP exchange is required for release of active METAP1.</text>
</comment>
<comment type="catalytic activity">
    <reaction evidence="1">
        <text>GTP + H2O = GDP + phosphate + H(+)</text>
        <dbReference type="Rhea" id="RHEA:19669"/>
        <dbReference type="ChEBI" id="CHEBI:15377"/>
        <dbReference type="ChEBI" id="CHEBI:15378"/>
        <dbReference type="ChEBI" id="CHEBI:37565"/>
        <dbReference type="ChEBI" id="CHEBI:43474"/>
        <dbReference type="ChEBI" id="CHEBI:58189"/>
    </reaction>
    <physiologicalReaction direction="left-to-right" evidence="1">
        <dbReference type="Rhea" id="RHEA:19670"/>
    </physiologicalReaction>
</comment>
<comment type="subcellular location">
    <subcellularLocation>
        <location evidence="1">Nucleus</location>
    </subcellularLocation>
</comment>
<comment type="similarity">
    <text evidence="5">Belongs to the SIMIBI class G3E GTPase family. ZNG1 subfamily.</text>
</comment>
<accession>Q8IUF1</accession>
<accession>Q0VAN3</accession>
<keyword id="KW-0143">Chaperone</keyword>
<keyword id="KW-0342">GTP-binding</keyword>
<keyword id="KW-0378">Hydrolase</keyword>
<keyword id="KW-0479">Metal-binding</keyword>
<keyword id="KW-0547">Nucleotide-binding</keyword>
<keyword id="KW-0539">Nucleus</keyword>
<keyword id="KW-1267">Proteomics identification</keyword>
<keyword id="KW-1185">Reference proteome</keyword>
<keyword id="KW-0862">Zinc</keyword>
<dbReference type="EC" id="3.6.5.-" evidence="1"/>
<dbReference type="EMBL" id="AF452722">
    <property type="protein sequence ID" value="AAN64907.1"/>
    <property type="molecule type" value="mRNA"/>
</dbReference>
<dbReference type="EMBL" id="AY343910">
    <property type="protein sequence ID" value="AAQ76868.1"/>
    <property type="molecule type" value="mRNA"/>
</dbReference>
<dbReference type="EMBL" id="AK290072">
    <property type="protein sequence ID" value="BAF82761.1"/>
    <property type="molecule type" value="mRNA"/>
</dbReference>
<dbReference type="EMBL" id="AC016745">
    <property type="status" value="NOT_ANNOTATED_CDS"/>
    <property type="molecule type" value="Genomic_DNA"/>
</dbReference>
<dbReference type="EMBL" id="AL078621">
    <property type="status" value="NOT_ANNOTATED_CDS"/>
    <property type="molecule type" value="Genomic_DNA"/>
</dbReference>
<dbReference type="EMBL" id="BC120991">
    <property type="protein sequence ID" value="AAI20992.1"/>
    <property type="molecule type" value="mRNA"/>
</dbReference>
<dbReference type="EMBL" id="BC120992">
    <property type="protein sequence ID" value="AAI20993.1"/>
    <property type="molecule type" value="mRNA"/>
</dbReference>
<dbReference type="CCDS" id="CCDS2116.1"/>
<dbReference type="RefSeq" id="NP_742000.1">
    <property type="nucleotide sequence ID" value="NM_172003.3"/>
</dbReference>
<dbReference type="SMR" id="Q8IUF1"/>
<dbReference type="BioGRID" id="127299">
    <property type="interactions" value="95"/>
</dbReference>
<dbReference type="FunCoup" id="Q8IUF1">
    <property type="interactions" value="1383"/>
</dbReference>
<dbReference type="IntAct" id="Q8IUF1">
    <property type="interactions" value="44"/>
</dbReference>
<dbReference type="MINT" id="Q8IUF1"/>
<dbReference type="STRING" id="9606.ENSP00000259199"/>
<dbReference type="iPTMnet" id="Q8IUF1"/>
<dbReference type="PhosphoSitePlus" id="Q8IUF1"/>
<dbReference type="BioMuta" id="CBWD2"/>
<dbReference type="DMDM" id="74714301"/>
<dbReference type="jPOST" id="Q8IUF1"/>
<dbReference type="MassIVE" id="Q8IUF1"/>
<dbReference type="PaxDb" id="9606-ENSP00000259199"/>
<dbReference type="PeptideAtlas" id="Q8IUF1"/>
<dbReference type="ProteomicsDB" id="70557"/>
<dbReference type="Pumba" id="Q8IUF1"/>
<dbReference type="Antibodypedia" id="59948">
    <property type="antibodies" value="44 antibodies from 11 providers"/>
</dbReference>
<dbReference type="DNASU" id="150472"/>
<dbReference type="Ensembl" id="ENST00000259199.9">
    <property type="protein sequence ID" value="ENSP00000259199.4"/>
    <property type="gene ID" value="ENSG00000136682.16"/>
</dbReference>
<dbReference type="GeneID" id="150472"/>
<dbReference type="KEGG" id="hsa:150472"/>
<dbReference type="MANE-Select" id="ENST00000259199.9">
    <property type="protein sequence ID" value="ENSP00000259199.4"/>
    <property type="RefSeq nucleotide sequence ID" value="NM_172003.3"/>
    <property type="RefSeq protein sequence ID" value="NP_742000.1"/>
</dbReference>
<dbReference type="UCSC" id="uc002tju.4">
    <property type="organism name" value="human"/>
</dbReference>
<dbReference type="AGR" id="HGNC:17907"/>
<dbReference type="CTD" id="150472"/>
<dbReference type="GeneCards" id="ZNG1B"/>
<dbReference type="HGNC" id="HGNC:17907">
    <property type="gene designation" value="ZNG1B"/>
</dbReference>
<dbReference type="HPA" id="ENSG00000136682">
    <property type="expression patterns" value="Low tissue specificity"/>
</dbReference>
<dbReference type="MIM" id="611079">
    <property type="type" value="gene"/>
</dbReference>
<dbReference type="neXtProt" id="NX_Q8IUF1"/>
<dbReference type="OpenTargets" id="ENSG00000136682"/>
<dbReference type="PharmGKB" id="PA26125"/>
<dbReference type="VEuPathDB" id="HostDB:ENSG00000136682"/>
<dbReference type="eggNOG" id="KOG2743">
    <property type="taxonomic scope" value="Eukaryota"/>
</dbReference>
<dbReference type="GeneTree" id="ENSGT00940000164995"/>
<dbReference type="InParanoid" id="Q8IUF1"/>
<dbReference type="OMA" id="WDTEWAE"/>
<dbReference type="OrthoDB" id="5188at9604"/>
<dbReference type="PAN-GO" id="Q8IUF1">
    <property type="GO annotations" value="1 GO annotation based on evolutionary models"/>
</dbReference>
<dbReference type="PhylomeDB" id="Q8IUF1"/>
<dbReference type="TreeFam" id="TF332679"/>
<dbReference type="PathwayCommons" id="Q8IUF1"/>
<dbReference type="SignaLink" id="Q8IUF1"/>
<dbReference type="BioGRID-ORCS" id="150472">
    <property type="hits" value="369 hits in 693 CRISPR screens"/>
</dbReference>
<dbReference type="ChiTaRS" id="CBWD2">
    <property type="organism name" value="human"/>
</dbReference>
<dbReference type="GenomeRNAi" id="150472"/>
<dbReference type="Pharos" id="Q8IUF1">
    <property type="development level" value="Tdark"/>
</dbReference>
<dbReference type="PRO" id="PR:Q8IUF1"/>
<dbReference type="Proteomes" id="UP000005640">
    <property type="component" value="Chromosome 2"/>
</dbReference>
<dbReference type="RNAct" id="Q8IUF1">
    <property type="molecule type" value="protein"/>
</dbReference>
<dbReference type="Bgee" id="ENSG00000136682">
    <property type="expression patterns" value="Expressed in monocyte and 97 other cell types or tissues"/>
</dbReference>
<dbReference type="ExpressionAtlas" id="Q8IUF1">
    <property type="expression patterns" value="baseline and differential"/>
</dbReference>
<dbReference type="GO" id="GO:0005737">
    <property type="term" value="C:cytoplasm"/>
    <property type="evidence" value="ECO:0000318"/>
    <property type="project" value="GO_Central"/>
</dbReference>
<dbReference type="GO" id="GO:0005634">
    <property type="term" value="C:nucleus"/>
    <property type="evidence" value="ECO:0000250"/>
    <property type="project" value="UniProtKB"/>
</dbReference>
<dbReference type="GO" id="GO:0005525">
    <property type="term" value="F:GTP binding"/>
    <property type="evidence" value="ECO:0007669"/>
    <property type="project" value="UniProtKB-KW"/>
</dbReference>
<dbReference type="GO" id="GO:0016787">
    <property type="term" value="F:hydrolase activity"/>
    <property type="evidence" value="ECO:0007669"/>
    <property type="project" value="UniProtKB-KW"/>
</dbReference>
<dbReference type="GO" id="GO:0046872">
    <property type="term" value="F:metal ion binding"/>
    <property type="evidence" value="ECO:0007669"/>
    <property type="project" value="UniProtKB-KW"/>
</dbReference>
<dbReference type="CDD" id="cd03112">
    <property type="entry name" value="CobW-like"/>
    <property type="match status" value="1"/>
</dbReference>
<dbReference type="Gene3D" id="3.30.1220.10">
    <property type="entry name" value="CobW-like, C-terminal domain"/>
    <property type="match status" value="1"/>
</dbReference>
<dbReference type="Gene3D" id="3.40.50.300">
    <property type="entry name" value="P-loop containing nucleotide triphosphate hydrolases"/>
    <property type="match status" value="1"/>
</dbReference>
<dbReference type="InterPro" id="IPR036627">
    <property type="entry name" value="CobW-likC_sf"/>
</dbReference>
<dbReference type="InterPro" id="IPR011629">
    <property type="entry name" value="CobW-like_C"/>
</dbReference>
<dbReference type="InterPro" id="IPR003495">
    <property type="entry name" value="CobW/HypB/UreG_nucleotide-bd"/>
</dbReference>
<dbReference type="InterPro" id="IPR027417">
    <property type="entry name" value="P-loop_NTPase"/>
</dbReference>
<dbReference type="InterPro" id="IPR051316">
    <property type="entry name" value="Zinc-reg_GTPase_activator"/>
</dbReference>
<dbReference type="PANTHER" id="PTHR13748">
    <property type="entry name" value="COBW-RELATED"/>
    <property type="match status" value="1"/>
</dbReference>
<dbReference type="PANTHER" id="PTHR13748:SF31">
    <property type="entry name" value="ZINC-REGULATED GTPASE METALLOPROTEIN ACTIVATOR 1A-RELATED"/>
    <property type="match status" value="1"/>
</dbReference>
<dbReference type="Pfam" id="PF02492">
    <property type="entry name" value="cobW"/>
    <property type="match status" value="1"/>
</dbReference>
<dbReference type="Pfam" id="PF07683">
    <property type="entry name" value="CobW_C"/>
    <property type="match status" value="1"/>
</dbReference>
<dbReference type="SUPFAM" id="SSF90002">
    <property type="entry name" value="Hypothetical protein YjiA, C-terminal domain"/>
    <property type="match status" value="1"/>
</dbReference>
<dbReference type="SUPFAM" id="SSF52540">
    <property type="entry name" value="P-loop containing nucleoside triphosphate hydrolases"/>
    <property type="match status" value="1"/>
</dbReference>
<reference key="1">
    <citation type="journal article" date="2002" name="Genome Res.">
        <title>Gene content and function of the ancestral chromosome fusion site in human chromosome 2q13-2q14.1 and paralogous regions.</title>
        <authorList>
            <person name="Fan Y."/>
            <person name="Newman T."/>
            <person name="Linardopoulou E."/>
            <person name="Trask B.J."/>
        </authorList>
    </citation>
    <scope>NUCLEOTIDE SEQUENCE [MRNA]</scope>
</reference>
<reference key="2">
    <citation type="journal article" date="2004" name="Genomics">
        <title>Diverse fates of paralogs following segmental duplication of telomeric genes.</title>
        <authorList>
            <person name="Wong A."/>
            <person name="Vallender E.J."/>
            <person name="Heretis K."/>
            <person name="Ilkin Y."/>
            <person name="Lahn B.T."/>
            <person name="Lese Martin C."/>
            <person name="Ledbetter D.H."/>
        </authorList>
    </citation>
    <scope>NUCLEOTIDE SEQUENCE [MRNA]</scope>
</reference>
<reference key="3">
    <citation type="journal article" date="2004" name="Nat. Genet.">
        <title>Complete sequencing and characterization of 21,243 full-length human cDNAs.</title>
        <authorList>
            <person name="Ota T."/>
            <person name="Suzuki Y."/>
            <person name="Nishikawa T."/>
            <person name="Otsuki T."/>
            <person name="Sugiyama T."/>
            <person name="Irie R."/>
            <person name="Wakamatsu A."/>
            <person name="Hayashi K."/>
            <person name="Sato H."/>
            <person name="Nagai K."/>
            <person name="Kimura K."/>
            <person name="Makita H."/>
            <person name="Sekine M."/>
            <person name="Obayashi M."/>
            <person name="Nishi T."/>
            <person name="Shibahara T."/>
            <person name="Tanaka T."/>
            <person name="Ishii S."/>
            <person name="Yamamoto J."/>
            <person name="Saito K."/>
            <person name="Kawai Y."/>
            <person name="Isono Y."/>
            <person name="Nakamura Y."/>
            <person name="Nagahari K."/>
            <person name="Murakami K."/>
            <person name="Yasuda T."/>
            <person name="Iwayanagi T."/>
            <person name="Wagatsuma M."/>
            <person name="Shiratori A."/>
            <person name="Sudo H."/>
            <person name="Hosoiri T."/>
            <person name="Kaku Y."/>
            <person name="Kodaira H."/>
            <person name="Kondo H."/>
            <person name="Sugawara M."/>
            <person name="Takahashi M."/>
            <person name="Kanda K."/>
            <person name="Yokoi T."/>
            <person name="Furuya T."/>
            <person name="Kikkawa E."/>
            <person name="Omura Y."/>
            <person name="Abe K."/>
            <person name="Kamihara K."/>
            <person name="Katsuta N."/>
            <person name="Sato K."/>
            <person name="Tanikawa M."/>
            <person name="Yamazaki M."/>
            <person name="Ninomiya K."/>
            <person name="Ishibashi T."/>
            <person name="Yamashita H."/>
            <person name="Murakawa K."/>
            <person name="Fujimori K."/>
            <person name="Tanai H."/>
            <person name="Kimata M."/>
            <person name="Watanabe M."/>
            <person name="Hiraoka S."/>
            <person name="Chiba Y."/>
            <person name="Ishida S."/>
            <person name="Ono Y."/>
            <person name="Takiguchi S."/>
            <person name="Watanabe S."/>
            <person name="Yosida M."/>
            <person name="Hotuta T."/>
            <person name="Kusano J."/>
            <person name="Kanehori K."/>
            <person name="Takahashi-Fujii A."/>
            <person name="Hara H."/>
            <person name="Tanase T.-O."/>
            <person name="Nomura Y."/>
            <person name="Togiya S."/>
            <person name="Komai F."/>
            <person name="Hara R."/>
            <person name="Takeuchi K."/>
            <person name="Arita M."/>
            <person name="Imose N."/>
            <person name="Musashino K."/>
            <person name="Yuuki H."/>
            <person name="Oshima A."/>
            <person name="Sasaki N."/>
            <person name="Aotsuka S."/>
            <person name="Yoshikawa Y."/>
            <person name="Matsunawa H."/>
            <person name="Ichihara T."/>
            <person name="Shiohata N."/>
            <person name="Sano S."/>
            <person name="Moriya S."/>
            <person name="Momiyama H."/>
            <person name="Satoh N."/>
            <person name="Takami S."/>
            <person name="Terashima Y."/>
            <person name="Suzuki O."/>
            <person name="Nakagawa S."/>
            <person name="Senoh A."/>
            <person name="Mizoguchi H."/>
            <person name="Goto Y."/>
            <person name="Shimizu F."/>
            <person name="Wakebe H."/>
            <person name="Hishigaki H."/>
            <person name="Watanabe T."/>
            <person name="Sugiyama A."/>
            <person name="Takemoto M."/>
            <person name="Kawakami B."/>
            <person name="Yamazaki M."/>
            <person name="Watanabe K."/>
            <person name="Kumagai A."/>
            <person name="Itakura S."/>
            <person name="Fukuzumi Y."/>
            <person name="Fujimori Y."/>
            <person name="Komiyama M."/>
            <person name="Tashiro H."/>
            <person name="Tanigami A."/>
            <person name="Fujiwara T."/>
            <person name="Ono T."/>
            <person name="Yamada K."/>
            <person name="Fujii Y."/>
            <person name="Ozaki K."/>
            <person name="Hirao M."/>
            <person name="Ohmori Y."/>
            <person name="Kawabata A."/>
            <person name="Hikiji T."/>
            <person name="Kobatake N."/>
            <person name="Inagaki H."/>
            <person name="Ikema Y."/>
            <person name="Okamoto S."/>
            <person name="Okitani R."/>
            <person name="Kawakami T."/>
            <person name="Noguchi S."/>
            <person name="Itoh T."/>
            <person name="Shigeta K."/>
            <person name="Senba T."/>
            <person name="Matsumura K."/>
            <person name="Nakajima Y."/>
            <person name="Mizuno T."/>
            <person name="Morinaga M."/>
            <person name="Sasaki M."/>
            <person name="Togashi T."/>
            <person name="Oyama M."/>
            <person name="Hata H."/>
            <person name="Watanabe M."/>
            <person name="Komatsu T."/>
            <person name="Mizushima-Sugano J."/>
            <person name="Satoh T."/>
            <person name="Shirai Y."/>
            <person name="Takahashi Y."/>
            <person name="Nakagawa K."/>
            <person name="Okumura K."/>
            <person name="Nagase T."/>
            <person name="Nomura N."/>
            <person name="Kikuchi H."/>
            <person name="Masuho Y."/>
            <person name="Yamashita R."/>
            <person name="Nakai K."/>
            <person name="Yada T."/>
            <person name="Nakamura Y."/>
            <person name="Ohara O."/>
            <person name="Isogai T."/>
            <person name="Sugano S."/>
        </authorList>
    </citation>
    <scope>NUCLEOTIDE SEQUENCE [LARGE SCALE MRNA]</scope>
    <source>
        <tissue>Substantia nigra</tissue>
    </source>
</reference>
<reference key="4">
    <citation type="journal article" date="2005" name="Nature">
        <title>Generation and annotation of the DNA sequences of human chromosomes 2 and 4.</title>
        <authorList>
            <person name="Hillier L.W."/>
            <person name="Graves T.A."/>
            <person name="Fulton R.S."/>
            <person name="Fulton L.A."/>
            <person name="Pepin K.H."/>
            <person name="Minx P."/>
            <person name="Wagner-McPherson C."/>
            <person name="Layman D."/>
            <person name="Wylie K."/>
            <person name="Sekhon M."/>
            <person name="Becker M.C."/>
            <person name="Fewell G.A."/>
            <person name="Delehaunty K.D."/>
            <person name="Miner T.L."/>
            <person name="Nash W.E."/>
            <person name="Kremitzki C."/>
            <person name="Oddy L."/>
            <person name="Du H."/>
            <person name="Sun H."/>
            <person name="Bradshaw-Cordum H."/>
            <person name="Ali J."/>
            <person name="Carter J."/>
            <person name="Cordes M."/>
            <person name="Harris A."/>
            <person name="Isak A."/>
            <person name="van Brunt A."/>
            <person name="Nguyen C."/>
            <person name="Du F."/>
            <person name="Courtney L."/>
            <person name="Kalicki J."/>
            <person name="Ozersky P."/>
            <person name="Abbott S."/>
            <person name="Armstrong J."/>
            <person name="Belter E.A."/>
            <person name="Caruso L."/>
            <person name="Cedroni M."/>
            <person name="Cotton M."/>
            <person name="Davidson T."/>
            <person name="Desai A."/>
            <person name="Elliott G."/>
            <person name="Erb T."/>
            <person name="Fronick C."/>
            <person name="Gaige T."/>
            <person name="Haakenson W."/>
            <person name="Haglund K."/>
            <person name="Holmes A."/>
            <person name="Harkins R."/>
            <person name="Kim K."/>
            <person name="Kruchowski S.S."/>
            <person name="Strong C.M."/>
            <person name="Grewal N."/>
            <person name="Goyea E."/>
            <person name="Hou S."/>
            <person name="Levy A."/>
            <person name="Martinka S."/>
            <person name="Mead K."/>
            <person name="McLellan M.D."/>
            <person name="Meyer R."/>
            <person name="Randall-Maher J."/>
            <person name="Tomlinson C."/>
            <person name="Dauphin-Kohlberg S."/>
            <person name="Kozlowicz-Reilly A."/>
            <person name="Shah N."/>
            <person name="Swearengen-Shahid S."/>
            <person name="Snider J."/>
            <person name="Strong J.T."/>
            <person name="Thompson J."/>
            <person name="Yoakum M."/>
            <person name="Leonard S."/>
            <person name="Pearman C."/>
            <person name="Trani L."/>
            <person name="Radionenko M."/>
            <person name="Waligorski J.E."/>
            <person name="Wang C."/>
            <person name="Rock S.M."/>
            <person name="Tin-Wollam A.-M."/>
            <person name="Maupin R."/>
            <person name="Latreille P."/>
            <person name="Wendl M.C."/>
            <person name="Yang S.-P."/>
            <person name="Pohl C."/>
            <person name="Wallis J.W."/>
            <person name="Spieth J."/>
            <person name="Bieri T.A."/>
            <person name="Berkowicz N."/>
            <person name="Nelson J.O."/>
            <person name="Osborne J."/>
            <person name="Ding L."/>
            <person name="Meyer R."/>
            <person name="Sabo A."/>
            <person name="Shotland Y."/>
            <person name="Sinha P."/>
            <person name="Wohldmann P.E."/>
            <person name="Cook L.L."/>
            <person name="Hickenbotham M.T."/>
            <person name="Eldred J."/>
            <person name="Williams D."/>
            <person name="Jones T.A."/>
            <person name="She X."/>
            <person name="Ciccarelli F.D."/>
            <person name="Izaurralde E."/>
            <person name="Taylor J."/>
            <person name="Schmutz J."/>
            <person name="Myers R.M."/>
            <person name="Cox D.R."/>
            <person name="Huang X."/>
            <person name="McPherson J.D."/>
            <person name="Mardis E.R."/>
            <person name="Clifton S.W."/>
            <person name="Warren W.C."/>
            <person name="Chinwalla A.T."/>
            <person name="Eddy S.R."/>
            <person name="Marra M.A."/>
            <person name="Ovcharenko I."/>
            <person name="Furey T.S."/>
            <person name="Miller W."/>
            <person name="Eichler E.E."/>
            <person name="Bork P."/>
            <person name="Suyama M."/>
            <person name="Torrents D."/>
            <person name="Waterston R.H."/>
            <person name="Wilson R.K."/>
        </authorList>
    </citation>
    <scope>NUCLEOTIDE SEQUENCE [LARGE SCALE GENOMIC DNA]</scope>
</reference>
<reference key="5">
    <citation type="journal article" date="2004" name="Genome Res.">
        <title>The status, quality, and expansion of the NIH full-length cDNA project: the Mammalian Gene Collection (MGC).</title>
        <authorList>
            <consortium name="The MGC Project Team"/>
        </authorList>
    </citation>
    <scope>NUCLEOTIDE SEQUENCE [LARGE SCALE MRNA]</scope>
</reference>
<reference key="6">
    <citation type="journal article" date="2022" name="Cell">
        <title>Zn-regulated GTPase metalloprotein activator 1 modulates vertebrate zinc homeostasis.</title>
        <authorList>
            <person name="Weiss A."/>
            <person name="Murdoch C.C."/>
            <person name="Edmonds K.A."/>
            <person name="Jordan M.R."/>
            <person name="Monteith A.J."/>
            <person name="Perera Y.R."/>
            <person name="Rodriguez Nassif A.M."/>
            <person name="Petoletti A.M."/>
            <person name="Beavers W.N."/>
            <person name="Munneke M.J."/>
            <person name="Drury S.L."/>
            <person name="Krystofiak E.S."/>
            <person name="Thalluri K."/>
            <person name="Wu H."/>
            <person name="Kruse A.R.S."/>
            <person name="DiMarchi R.D."/>
            <person name="Caprioli R.M."/>
            <person name="Spraggins J.M."/>
            <person name="Chazin W.J."/>
            <person name="Giedroc D.P."/>
            <person name="Skaar E.P."/>
        </authorList>
    </citation>
    <scope>NOMENCLATURE</scope>
</reference>
<proteinExistence type="evidence at protein level"/>
<evidence type="ECO:0000250" key="1">
    <source>
        <dbReference type="UniProtKB" id="Q8VEH6"/>
    </source>
</evidence>
<evidence type="ECO:0000255" key="2"/>
<evidence type="ECO:0000256" key="3">
    <source>
        <dbReference type="SAM" id="MobiDB-lite"/>
    </source>
</evidence>
<evidence type="ECO:0000303" key="4">
    <source>
    </source>
</evidence>
<evidence type="ECO:0000305" key="5"/>
<evidence type="ECO:0000312" key="6">
    <source>
        <dbReference type="HGNC" id="HGNC:17907"/>
    </source>
</evidence>
<organism>
    <name type="scientific">Homo sapiens</name>
    <name type="common">Human</name>
    <dbReference type="NCBI Taxonomy" id="9606"/>
    <lineage>
        <taxon>Eukaryota</taxon>
        <taxon>Metazoa</taxon>
        <taxon>Chordata</taxon>
        <taxon>Craniata</taxon>
        <taxon>Vertebrata</taxon>
        <taxon>Euteleostomi</taxon>
        <taxon>Mammalia</taxon>
        <taxon>Eutheria</taxon>
        <taxon>Euarchontoglires</taxon>
        <taxon>Primates</taxon>
        <taxon>Haplorrhini</taxon>
        <taxon>Catarrhini</taxon>
        <taxon>Hominidae</taxon>
        <taxon>Homo</taxon>
    </lineage>
</organism>
<gene>
    <name evidence="4 6" type="primary">ZNG1B</name>
    <name evidence="6" type="synonym">CBWD2</name>
</gene>